<organism>
    <name type="scientific">Rhipicephalus microplus</name>
    <name type="common">Cattle tick</name>
    <name type="synonym">Boophilus microplus</name>
    <dbReference type="NCBI Taxonomy" id="6941"/>
    <lineage>
        <taxon>Eukaryota</taxon>
        <taxon>Metazoa</taxon>
        <taxon>Ecdysozoa</taxon>
        <taxon>Arthropoda</taxon>
        <taxon>Chelicerata</taxon>
        <taxon>Arachnida</taxon>
        <taxon>Acari</taxon>
        <taxon>Parasitiformes</taxon>
        <taxon>Ixodida</taxon>
        <taxon>Ixodoidea</taxon>
        <taxon>Ixodidae</taxon>
        <taxon>Rhipicephalinae</taxon>
        <taxon>Rhipicephalus</taxon>
        <taxon>Boophilus</taxon>
    </lineage>
</organism>
<name>BMTIA_RHIMP</name>
<feature type="chain" id="PRO_0000155450" description="Kunitz-type serine protease inhibitor A">
    <location>
        <begin position="1"/>
        <end position="121"/>
    </location>
</feature>
<feature type="domain" description="BPTI/Kunitz inhibitor 1" evidence="2">
    <location>
        <begin position="10"/>
        <end position="59"/>
    </location>
</feature>
<feature type="domain" description="BPTI/Kunitz inhibitor 2" evidence="2">
    <location>
        <begin position="61"/>
        <end position="111"/>
    </location>
</feature>
<feature type="site" description="Reactive bond" evidence="6 7">
    <location>
        <begin position="20"/>
        <end position="21"/>
    </location>
</feature>
<feature type="site" description="Reactive bond" evidence="6 7">
    <location>
        <begin position="80"/>
        <end position="81"/>
    </location>
</feature>
<feature type="disulfide bond" evidence="1">
    <location>
        <begin position="10"/>
        <end position="59"/>
    </location>
</feature>
<feature type="disulfide bond" evidence="1">
    <location>
        <begin position="19"/>
        <end position="42"/>
    </location>
</feature>
<feature type="disulfide bond" evidence="1">
    <location>
        <begin position="34"/>
        <end position="55"/>
    </location>
</feature>
<feature type="disulfide bond" evidence="1">
    <location>
        <begin position="70"/>
        <end position="120"/>
    </location>
</feature>
<feature type="disulfide bond" evidence="1">
    <location>
        <begin position="79"/>
        <end position="103"/>
    </location>
</feature>
<feature type="disulfide bond" evidence="1">
    <location>
        <begin position="95"/>
        <end position="116"/>
    </location>
</feature>
<feature type="non-terminal residue" evidence="9">
    <location>
        <position position="121"/>
    </location>
</feature>
<accession>P83609</accession>
<reference key="1">
    <citation type="journal article" date="1999" name="Immunopharmacology">
        <title>A double headed serine proteinase inhibitor-human plasma kallikrein and elastase inhibitor-from Boophilus microplus larvae.</title>
        <authorList>
            <person name="Tanaka A.S."/>
            <person name="Andreotti R."/>
            <person name="Gomes A."/>
            <person name="Torquato R.J.S."/>
            <person name="Sampaio M.U."/>
            <person name="Sampaio C.A.M."/>
        </authorList>
    </citation>
    <scope>PROTEIN SEQUENCE</scope>
    <scope>FUNCTION</scope>
    <scope>DEVELOPMENTAL STAGE</scope>
    <source>
        <tissue>Larva</tissue>
    </source>
</reference>
<reference key="2">
    <citation type="journal article" date="2004" name="Biochimie">
        <title>Boophilus microplus tick larvae, a rich source of Kunitz type serine proteinase inhibitors.</title>
        <authorList>
            <person name="Sasaki S.D."/>
            <person name="Azzolini S.S."/>
            <person name="Hirata I.Y."/>
            <person name="Andreotti R."/>
            <person name="Tanaka A.S."/>
        </authorList>
    </citation>
    <scope>PROTEIN SEQUENCE OF 1-43</scope>
    <scope>FUNCTION</scope>
    <scope>DEVELOPMENTAL STAGE</scope>
    <source>
        <tissue>Larva</tissue>
    </source>
</reference>
<reference key="3">
    <citation type="journal article" date="2016" name="Vet. Parasitol.">
        <title>BmTI-A, a Kunitz type inhibitor from Rhipicephalus microplus able to interfere in vessel formation.</title>
        <authorList>
            <person name="Soares T.S."/>
            <person name="Oliveira F."/>
            <person name="Torquato R.J."/>
            <person name="Sasaki S.D."/>
            <person name="Araujo M.S."/>
            <person name="Paschoalin T."/>
            <person name="Tanaka A.S."/>
        </authorList>
    </citation>
    <scope>FUNCTION</scope>
    <scope>TISSUE SPECIFICITY</scope>
    <scope>GLYCOSYLATION</scope>
</reference>
<sequence>SQPHVNPFACYVAPDQGPCRAILRYYFDDDTQTCQRFTYGGCEGNANNXXXXEQCKASCKPETEYEAKKCLARPESGPCLAYMPMWGYDSKLGQCVEFIYGGCDGNDNKYTTEEECLKSCK</sequence>
<comment type="function">
    <text evidence="3 4 5">Serine protease inhibitor (PubMed:10615008, PubMed:15556274, PubMed:26921038). Inhibits bovine trypsin, bovine chymotrypsin, human plasmin, human plasma kallikrein and human neutrophil elastase, but not bovine thrombin, human factor Xa or porcine pancreatic kallikrein (PubMed:10615008, PubMed:15556274, PubMed:26921038). Reduces cell viability and inhibits capillary tube formation in vitro probably by reducing bradykinin release (PubMed:26921038). May play a role in blocking blood coagulation during the larvae fixation on cattle.</text>
</comment>
<comment type="subcellular location">
    <subcellularLocation>
        <location evidence="8">Secreted</location>
    </subcellularLocation>
</comment>
<comment type="tissue specificity">
    <text evidence="5">Highly expressed in gut (PubMed:26921038). Low-level expression in salivary gland and ovary (PubMed:26921038). Not detected in fat body and hemocytes (PubMed:26921038).</text>
</comment>
<comment type="developmental stage">
    <text evidence="3 4">Expressed in tick larvae (at protein level).</text>
</comment>
<comment type="PTM">
    <text evidence="5">N-glycosylated.</text>
</comment>
<dbReference type="VEuPathDB" id="VectorBase:LOC119167311"/>
<dbReference type="OrthoDB" id="5950222at2759"/>
<dbReference type="GO" id="GO:0005615">
    <property type="term" value="C:extracellular space"/>
    <property type="evidence" value="ECO:0007669"/>
    <property type="project" value="TreeGrafter"/>
</dbReference>
<dbReference type="GO" id="GO:0004867">
    <property type="term" value="F:serine-type endopeptidase inhibitor activity"/>
    <property type="evidence" value="ECO:0007669"/>
    <property type="project" value="UniProtKB-KW"/>
</dbReference>
<dbReference type="GO" id="GO:0044562">
    <property type="term" value="P:envenomation resulting in negative regulation of voltage-gated potassium channel activity in another organism"/>
    <property type="evidence" value="ECO:0007669"/>
    <property type="project" value="UniProtKB-ARBA"/>
</dbReference>
<dbReference type="CDD" id="cd22604">
    <property type="entry name" value="Kunitz_BmTI-like"/>
    <property type="match status" value="1"/>
</dbReference>
<dbReference type="FunFam" id="4.10.410.10:FF:000020">
    <property type="entry name" value="Collagen, type VI, alpha 3"/>
    <property type="match status" value="1"/>
</dbReference>
<dbReference type="Gene3D" id="4.10.410.10">
    <property type="entry name" value="Pancreatic trypsin inhibitor Kunitz domain"/>
    <property type="match status" value="2"/>
</dbReference>
<dbReference type="InterPro" id="IPR002223">
    <property type="entry name" value="Kunitz_BPTI"/>
</dbReference>
<dbReference type="InterPro" id="IPR036880">
    <property type="entry name" value="Kunitz_BPTI_sf"/>
</dbReference>
<dbReference type="InterPro" id="IPR020901">
    <property type="entry name" value="Prtase_inh_Kunz-CS"/>
</dbReference>
<dbReference type="InterPro" id="IPR050098">
    <property type="entry name" value="TFPI/VKTCI-like"/>
</dbReference>
<dbReference type="PANTHER" id="PTHR10083:SF374">
    <property type="entry name" value="BPTI_KUNITZ INHIBITOR DOMAIN-CONTAINING PROTEIN"/>
    <property type="match status" value="1"/>
</dbReference>
<dbReference type="PANTHER" id="PTHR10083">
    <property type="entry name" value="KUNITZ-TYPE PROTEASE INHIBITOR-RELATED"/>
    <property type="match status" value="1"/>
</dbReference>
<dbReference type="Pfam" id="PF00014">
    <property type="entry name" value="Kunitz_BPTI"/>
    <property type="match status" value="2"/>
</dbReference>
<dbReference type="PRINTS" id="PR00759">
    <property type="entry name" value="BASICPTASE"/>
</dbReference>
<dbReference type="SMART" id="SM00131">
    <property type="entry name" value="KU"/>
    <property type="match status" value="2"/>
</dbReference>
<dbReference type="SUPFAM" id="SSF57362">
    <property type="entry name" value="BPTI-like"/>
    <property type="match status" value="2"/>
</dbReference>
<dbReference type="PROSITE" id="PS00280">
    <property type="entry name" value="BPTI_KUNITZ_1"/>
    <property type="match status" value="2"/>
</dbReference>
<dbReference type="PROSITE" id="PS50279">
    <property type="entry name" value="BPTI_KUNITZ_2"/>
    <property type="match status" value="2"/>
</dbReference>
<keyword id="KW-0903">Direct protein sequencing</keyword>
<keyword id="KW-1015">Disulfide bond</keyword>
<keyword id="KW-0325">Glycoprotein</keyword>
<keyword id="KW-0646">Protease inhibitor</keyword>
<keyword id="KW-0677">Repeat</keyword>
<keyword id="KW-0964">Secreted</keyword>
<keyword id="KW-0722">Serine protease inhibitor</keyword>
<protein>
    <recommendedName>
        <fullName>Kunitz-type serine protease inhibitor A</fullName>
        <shortName evidence="6">BmTI-A</shortName>
    </recommendedName>
</protein>
<proteinExistence type="evidence at protein level"/>
<evidence type="ECO:0000250" key="1">
    <source>
        <dbReference type="UniProtKB" id="Q8WPI2"/>
    </source>
</evidence>
<evidence type="ECO:0000255" key="2">
    <source>
        <dbReference type="PROSITE-ProRule" id="PRU00031"/>
    </source>
</evidence>
<evidence type="ECO:0000269" key="3">
    <source>
    </source>
</evidence>
<evidence type="ECO:0000269" key="4">
    <source>
    </source>
</evidence>
<evidence type="ECO:0000269" key="5">
    <source>
    </source>
</evidence>
<evidence type="ECO:0000303" key="6">
    <source>
    </source>
</evidence>
<evidence type="ECO:0000303" key="7">
    <source>
    </source>
</evidence>
<evidence type="ECO:0000305" key="8"/>
<evidence type="ECO:0000305" key="9">
    <source>
    </source>
</evidence>